<accession>Q77TL3</accession>
<name>GLRX2_VACCT</name>
<feature type="chain" id="PRO_0000141628" description="Glutaredoxin-2">
    <location>
        <begin position="1"/>
        <end position="124"/>
    </location>
</feature>
<feature type="disulfide bond" description="Redox-active" evidence="1">
    <location>
        <begin position="13"/>
        <end position="16"/>
    </location>
</feature>
<comment type="function">
    <text evidence="1">Glutaredoxin necessary for virion morphogenesis and virus replication. Functions as a thiol-disulfide transfer protein between membrane-associated OPG128 and substrates OPG095 or OPG053. The complete pathway for formation of disulfide bonds in intracellular virion membrane proteins sequentially involves oxidation of OPG072, OPG128 and OPG088. Exhibit thioltransferase and dehydroascorbate reductase activities in vitro.</text>
</comment>
<comment type="subunit">
    <text evidence="1">Homodimer.</text>
</comment>
<comment type="subcellular location">
    <subcellularLocation>
        <location evidence="1">Host cytoplasm</location>
    </subcellularLocation>
</comment>
<comment type="induction">
    <text evidence="1">Expressed in the intermediate phase of the viral replicative cycle.</text>
</comment>
<comment type="similarity">
    <text evidence="2">Belongs to the glutaredoxin family.</text>
</comment>
<evidence type="ECO:0000250" key="1">
    <source>
        <dbReference type="UniProtKB" id="P68460"/>
    </source>
</evidence>
<evidence type="ECO:0000305" key="2"/>
<gene>
    <name type="primary">OPG088</name>
    <name type="ORF">TG4R</name>
</gene>
<organism>
    <name type="scientific">Vaccinia virus (strain Tian Tan)</name>
    <name type="common">VACV</name>
    <dbReference type="NCBI Taxonomy" id="10253"/>
    <lineage>
        <taxon>Viruses</taxon>
        <taxon>Varidnaviria</taxon>
        <taxon>Bamfordvirae</taxon>
        <taxon>Nucleocytoviricota</taxon>
        <taxon>Pokkesviricetes</taxon>
        <taxon>Chitovirales</taxon>
        <taxon>Poxviridae</taxon>
        <taxon>Chordopoxvirinae</taxon>
        <taxon>Orthopoxvirus</taxon>
        <taxon>Vaccinia virus</taxon>
    </lineage>
</organism>
<keyword id="KW-1015">Disulfide bond</keyword>
<keyword id="KW-0249">Electron transport</keyword>
<keyword id="KW-1035">Host cytoplasm</keyword>
<keyword id="KW-0676">Redox-active center</keyword>
<keyword id="KW-0813">Transport</keyword>
<reference key="1">
    <citation type="submission" date="1998-09" db="EMBL/GenBank/DDBJ databases">
        <title>Complete genomic sequence of vaccinia virus (Tian Tan strain).</title>
        <authorList>
            <person name="Jin Q."/>
            <person name="Hou Y.D."/>
            <person name="Cheng N.H."/>
            <person name="Yao E.M."/>
            <person name="Cheng S.X."/>
            <person name="Yang X.K."/>
            <person name="Jing D.Y."/>
            <person name="Yu W.H."/>
            <person name="Yuan J.S."/>
            <person name="Ma X.J."/>
        </authorList>
    </citation>
    <scope>NUCLEOTIDE SEQUENCE [LARGE SCALE GENOMIC DNA]</scope>
</reference>
<proteinExistence type="inferred from homology"/>
<dbReference type="EMBL" id="AF095689">
    <property type="protein sequence ID" value="AAF33941.1"/>
    <property type="molecule type" value="Genomic_DNA"/>
</dbReference>
<dbReference type="SMR" id="Q77TL3"/>
<dbReference type="Proteomes" id="UP000163220">
    <property type="component" value="Genome"/>
</dbReference>
<dbReference type="GO" id="GO:0030430">
    <property type="term" value="C:host cell cytoplasm"/>
    <property type="evidence" value="ECO:0007669"/>
    <property type="project" value="UniProtKB-SubCell"/>
</dbReference>
<dbReference type="Gene3D" id="3.40.30.10">
    <property type="entry name" value="Glutaredoxin"/>
    <property type="match status" value="1"/>
</dbReference>
<dbReference type="InterPro" id="IPR008554">
    <property type="entry name" value="Glutaredoxin-like"/>
</dbReference>
<dbReference type="InterPro" id="IPR036249">
    <property type="entry name" value="Thioredoxin-like_sf"/>
</dbReference>
<dbReference type="Pfam" id="PF05768">
    <property type="entry name" value="Glrx-like"/>
    <property type="match status" value="1"/>
</dbReference>
<dbReference type="SUPFAM" id="SSF52833">
    <property type="entry name" value="Thioredoxin-like"/>
    <property type="match status" value="1"/>
</dbReference>
<organismHost>
    <name type="scientific">Homo sapiens</name>
    <name type="common">Human</name>
    <dbReference type="NCBI Taxonomy" id="9606"/>
</organismHost>
<sequence>MKNVLIIFGKPYCSICENVSDAVEELKSEYDILHVDILSFFLKDGDSSMLGDVKRGTLIGNFAAHLSNYIVSIFKYNPQTKQMAFVDINKSLDFTKTDKSLVNLEILKSEIEKANYGVWPPVTE</sequence>
<protein>
    <recommendedName>
        <fullName>Glutaredoxin-2</fullName>
    </recommendedName>
</protein>